<evidence type="ECO:0000256" key="1">
    <source>
        <dbReference type="SAM" id="MobiDB-lite"/>
    </source>
</evidence>
<evidence type="ECO:0000269" key="2">
    <source>
    </source>
</evidence>
<name>YCA8_SCHPO</name>
<feature type="chain" id="PRO_0000343154" description="Uncharacterized protein C895.08c">
    <location>
        <begin position="1"/>
        <end position="490"/>
    </location>
</feature>
<feature type="region of interest" description="Disordered" evidence="1">
    <location>
        <begin position="370"/>
        <end position="406"/>
    </location>
</feature>
<feature type="compositionally biased region" description="Low complexity" evidence="1">
    <location>
        <begin position="370"/>
        <end position="385"/>
    </location>
</feature>
<feature type="compositionally biased region" description="Polar residues" evidence="1">
    <location>
        <begin position="391"/>
        <end position="406"/>
    </location>
</feature>
<gene>
    <name type="ORF">SPCC895.08c</name>
</gene>
<accession>O94535</accession>
<dbReference type="EMBL" id="CU329672">
    <property type="protein sequence ID" value="CAA22844.1"/>
    <property type="molecule type" value="Genomic_DNA"/>
</dbReference>
<dbReference type="PIR" id="T41646">
    <property type="entry name" value="T41646"/>
</dbReference>
<dbReference type="RefSeq" id="NP_588049.1">
    <property type="nucleotide sequence ID" value="NM_001023041.2"/>
</dbReference>
<dbReference type="iPTMnet" id="O94535"/>
<dbReference type="PaxDb" id="4896-SPCC895.08c.1"/>
<dbReference type="EnsemblFungi" id="SPCC895.08c.1">
    <property type="protein sequence ID" value="SPCC895.08c.1:pep"/>
    <property type="gene ID" value="SPCC895.08c"/>
</dbReference>
<dbReference type="KEGG" id="spo:2539597"/>
<dbReference type="PomBase" id="SPCC895.08c"/>
<dbReference type="VEuPathDB" id="FungiDB:SPCC895.08c"/>
<dbReference type="HOGENOM" id="CLU_679995_0_0_1"/>
<dbReference type="InParanoid" id="O94535"/>
<dbReference type="OMA" id="YTFDIIA"/>
<dbReference type="PRO" id="PR:O94535"/>
<dbReference type="Proteomes" id="UP000002485">
    <property type="component" value="Chromosome III"/>
</dbReference>
<dbReference type="GO" id="GO:0005829">
    <property type="term" value="C:cytosol"/>
    <property type="evidence" value="ECO:0007005"/>
    <property type="project" value="PomBase"/>
</dbReference>
<dbReference type="GO" id="GO:0005634">
    <property type="term" value="C:nucleus"/>
    <property type="evidence" value="ECO:0007005"/>
    <property type="project" value="PomBase"/>
</dbReference>
<reference key="1">
    <citation type="journal article" date="2002" name="Nature">
        <title>The genome sequence of Schizosaccharomyces pombe.</title>
        <authorList>
            <person name="Wood V."/>
            <person name="Gwilliam R."/>
            <person name="Rajandream M.A."/>
            <person name="Lyne M.H."/>
            <person name="Lyne R."/>
            <person name="Stewart A."/>
            <person name="Sgouros J.G."/>
            <person name="Peat N."/>
            <person name="Hayles J."/>
            <person name="Baker S.G."/>
            <person name="Basham D."/>
            <person name="Bowman S."/>
            <person name="Brooks K."/>
            <person name="Brown D."/>
            <person name="Brown S."/>
            <person name="Chillingworth T."/>
            <person name="Churcher C.M."/>
            <person name="Collins M."/>
            <person name="Connor R."/>
            <person name="Cronin A."/>
            <person name="Davis P."/>
            <person name="Feltwell T."/>
            <person name="Fraser A."/>
            <person name="Gentles S."/>
            <person name="Goble A."/>
            <person name="Hamlin N."/>
            <person name="Harris D.E."/>
            <person name="Hidalgo J."/>
            <person name="Hodgson G."/>
            <person name="Holroyd S."/>
            <person name="Hornsby T."/>
            <person name="Howarth S."/>
            <person name="Huckle E.J."/>
            <person name="Hunt S."/>
            <person name="Jagels K."/>
            <person name="James K.D."/>
            <person name="Jones L."/>
            <person name="Jones M."/>
            <person name="Leather S."/>
            <person name="McDonald S."/>
            <person name="McLean J."/>
            <person name="Mooney P."/>
            <person name="Moule S."/>
            <person name="Mungall K.L."/>
            <person name="Murphy L.D."/>
            <person name="Niblett D."/>
            <person name="Odell C."/>
            <person name="Oliver K."/>
            <person name="O'Neil S."/>
            <person name="Pearson D."/>
            <person name="Quail M.A."/>
            <person name="Rabbinowitsch E."/>
            <person name="Rutherford K.M."/>
            <person name="Rutter S."/>
            <person name="Saunders D."/>
            <person name="Seeger K."/>
            <person name="Sharp S."/>
            <person name="Skelton J."/>
            <person name="Simmonds M.N."/>
            <person name="Squares R."/>
            <person name="Squares S."/>
            <person name="Stevens K."/>
            <person name="Taylor K."/>
            <person name="Taylor R.G."/>
            <person name="Tivey A."/>
            <person name="Walsh S.V."/>
            <person name="Warren T."/>
            <person name="Whitehead S."/>
            <person name="Woodward J.R."/>
            <person name="Volckaert G."/>
            <person name="Aert R."/>
            <person name="Robben J."/>
            <person name="Grymonprez B."/>
            <person name="Weltjens I."/>
            <person name="Vanstreels E."/>
            <person name="Rieger M."/>
            <person name="Schaefer M."/>
            <person name="Mueller-Auer S."/>
            <person name="Gabel C."/>
            <person name="Fuchs M."/>
            <person name="Duesterhoeft A."/>
            <person name="Fritzc C."/>
            <person name="Holzer E."/>
            <person name="Moestl D."/>
            <person name="Hilbert H."/>
            <person name="Borzym K."/>
            <person name="Langer I."/>
            <person name="Beck A."/>
            <person name="Lehrach H."/>
            <person name="Reinhardt R."/>
            <person name="Pohl T.M."/>
            <person name="Eger P."/>
            <person name="Zimmermann W."/>
            <person name="Wedler H."/>
            <person name="Wambutt R."/>
            <person name="Purnelle B."/>
            <person name="Goffeau A."/>
            <person name="Cadieu E."/>
            <person name="Dreano S."/>
            <person name="Gloux S."/>
            <person name="Lelaure V."/>
            <person name="Mottier S."/>
            <person name="Galibert F."/>
            <person name="Aves S.J."/>
            <person name="Xiang Z."/>
            <person name="Hunt C."/>
            <person name="Moore K."/>
            <person name="Hurst S.M."/>
            <person name="Lucas M."/>
            <person name="Rochet M."/>
            <person name="Gaillardin C."/>
            <person name="Tallada V.A."/>
            <person name="Garzon A."/>
            <person name="Thode G."/>
            <person name="Daga R.R."/>
            <person name="Cruzado L."/>
            <person name="Jimenez J."/>
            <person name="Sanchez M."/>
            <person name="del Rey F."/>
            <person name="Benito J."/>
            <person name="Dominguez A."/>
            <person name="Revuelta J.L."/>
            <person name="Moreno S."/>
            <person name="Armstrong J."/>
            <person name="Forsburg S.L."/>
            <person name="Cerutti L."/>
            <person name="Lowe T."/>
            <person name="McCombie W.R."/>
            <person name="Paulsen I."/>
            <person name="Potashkin J."/>
            <person name="Shpakovski G.V."/>
            <person name="Ussery D."/>
            <person name="Barrell B.G."/>
            <person name="Nurse P."/>
        </authorList>
    </citation>
    <scope>NUCLEOTIDE SEQUENCE [LARGE SCALE GENOMIC DNA]</scope>
    <source>
        <strain>972 / ATCC 24843</strain>
    </source>
</reference>
<reference key="2">
    <citation type="journal article" date="2006" name="Nat. Biotechnol.">
        <title>ORFeome cloning and global analysis of protein localization in the fission yeast Schizosaccharomyces pombe.</title>
        <authorList>
            <person name="Matsuyama A."/>
            <person name="Arai R."/>
            <person name="Yashiroda Y."/>
            <person name="Shirai A."/>
            <person name="Kamata A."/>
            <person name="Sekido S."/>
            <person name="Kobayashi Y."/>
            <person name="Hashimoto A."/>
            <person name="Hamamoto M."/>
            <person name="Hiraoka Y."/>
            <person name="Horinouchi S."/>
            <person name="Yoshida M."/>
        </authorList>
    </citation>
    <scope>SUBCELLULAR LOCATION [LARGE SCALE ANALYSIS]</scope>
</reference>
<sequence>MDNSRDKIHILGAVSDTFQEVQHPCSILKYKVYFVTTDTFYCKYLTASFTGLKKFPTERQLPLECHFNHIDWDLGNNFKVKEGVFYTFDIIAPLPRCTPRTIVTQEGSISYKLTVKLYTEDDCRMPKSANVPVVVPFTLNPDRIPESQHIRYGAPLNDACFTSLSMKSSKYSFLTAFFKYPQQCYKGPGCVCPLLIDLESEDADVLSSTPGSAGTDDPHIDPIAINSQDSQFIFQDRLPRLSNDCDMKGRSSLSRTSSPVVEKKLKRYYIRVLLVQSITFFLFNDAFRNSITVLFEDGKWSPPIVPGLHSRVEFTIPVNDLIHGSCTENPHLLVRHSIYVSIHSREPSSLSRKLAPPFLRTHKAKSNSLFSMKRPSSSSSSLSGSWHGDTENSVKQSLASPSEASLPNLSKYSRKNAKKLNEWLDSLDFKLPIYLFHRKLESELSHLPPYSPYRDSYFYLEDDDGDADTPSTASLDYFSNISPPDFLNKA</sequence>
<organism>
    <name type="scientific">Schizosaccharomyces pombe (strain 972 / ATCC 24843)</name>
    <name type="common">Fission yeast</name>
    <dbReference type="NCBI Taxonomy" id="284812"/>
    <lineage>
        <taxon>Eukaryota</taxon>
        <taxon>Fungi</taxon>
        <taxon>Dikarya</taxon>
        <taxon>Ascomycota</taxon>
        <taxon>Taphrinomycotina</taxon>
        <taxon>Schizosaccharomycetes</taxon>
        <taxon>Schizosaccharomycetales</taxon>
        <taxon>Schizosaccharomycetaceae</taxon>
        <taxon>Schizosaccharomyces</taxon>
    </lineage>
</organism>
<keyword id="KW-0963">Cytoplasm</keyword>
<keyword id="KW-0539">Nucleus</keyword>
<keyword id="KW-1185">Reference proteome</keyword>
<protein>
    <recommendedName>
        <fullName>Uncharacterized protein C895.08c</fullName>
    </recommendedName>
</protein>
<comment type="subcellular location">
    <subcellularLocation>
        <location evidence="2">Cytoplasm</location>
    </subcellularLocation>
    <subcellularLocation>
        <location evidence="2">Nucleus</location>
    </subcellularLocation>
</comment>
<proteinExistence type="predicted"/>